<proteinExistence type="evidence at protein level"/>
<gene>
    <name evidence="1" type="primary">hopP</name>
    <name evidence="5" type="ordered locus">HELO_1704</name>
</gene>
<reference key="1">
    <citation type="journal article" date="2011" name="Environ. Microbiol.">
        <title>A blueprint of ectoine metabolism from the genome of the industrial producer Halomonas elongata DSM 2581(T).</title>
        <authorList>
            <person name="Schwibbert K."/>
            <person name="Marin-Sanguino A."/>
            <person name="Bagyan I."/>
            <person name="Heidrich G."/>
            <person name="Lentzen G."/>
            <person name="Seitz H."/>
            <person name="Rampp M."/>
            <person name="Schuster S.C."/>
            <person name="Klenk H.P."/>
            <person name="Pfeiffer F."/>
            <person name="Oesterhelt D."/>
            <person name="Kunte H.J."/>
        </authorList>
    </citation>
    <scope>NUCLEOTIDE SEQUENCE [LARGE SCALE GENOMIC DNA]</scope>
    <source>
        <strain>ATCC 33173 / DSM 2581 / NBRC 15536 / NCIMB 2198 / 1H9</strain>
    </source>
</reference>
<reference key="2">
    <citation type="journal article" date="2004" name="J. Basic Microbiol.">
        <title>Major outer membrane proteins in moderately halophilic eubacteria of genera Chromohalobacter and Halomonas.</title>
        <authorList>
            <person name="Tokunaga H."/>
            <person name="Mitsuo K."/>
            <person name="Kamekura M."/>
            <person name="Tokunaga M."/>
        </authorList>
    </citation>
    <scope>PROTEIN SEQUENCE OF 22-33</scope>
    <scope>SUBCELLULAR LOCATION</scope>
    <source>
        <strain>ATCC 33173 / DSM 2581 / NBRC 15536 / NCIMB 2198 / 1H9</strain>
    </source>
</reference>
<organism>
    <name type="scientific">Halomonas elongata (strain ATCC 33173 / DSM 2581 / NBRC 15536 / NCIMB 2198 / 1H9)</name>
    <dbReference type="NCBI Taxonomy" id="768066"/>
    <lineage>
        <taxon>Bacteria</taxon>
        <taxon>Pseudomonadati</taxon>
        <taxon>Pseudomonadota</taxon>
        <taxon>Gammaproteobacteria</taxon>
        <taxon>Oceanospirillales</taxon>
        <taxon>Halomonadaceae</taxon>
        <taxon>Halomonas</taxon>
    </lineage>
</organism>
<dbReference type="EMBL" id="FN869568">
    <property type="protein sequence ID" value="CBV41588.1"/>
    <property type="molecule type" value="Genomic_DNA"/>
</dbReference>
<dbReference type="RefSeq" id="WP_013331460.1">
    <property type="nucleotide sequence ID" value="NC_014532.2"/>
</dbReference>
<dbReference type="SMR" id="E1V825"/>
<dbReference type="STRING" id="768066.HELO_1704"/>
<dbReference type="GeneID" id="91008933"/>
<dbReference type="KEGG" id="hel:HELO_1704"/>
<dbReference type="eggNOG" id="COG3203">
    <property type="taxonomic scope" value="Bacteria"/>
</dbReference>
<dbReference type="HOGENOM" id="CLU_068036_0_0_6"/>
<dbReference type="OrthoDB" id="8957883at2"/>
<dbReference type="Proteomes" id="UP000008707">
    <property type="component" value="Chromosome"/>
</dbReference>
<dbReference type="GO" id="GO:0009279">
    <property type="term" value="C:cell outer membrane"/>
    <property type="evidence" value="ECO:0007669"/>
    <property type="project" value="UniProtKB-SubCell"/>
</dbReference>
<dbReference type="GO" id="GO:0046930">
    <property type="term" value="C:pore complex"/>
    <property type="evidence" value="ECO:0007669"/>
    <property type="project" value="UniProtKB-KW"/>
</dbReference>
<dbReference type="GO" id="GO:0015288">
    <property type="term" value="F:porin activity"/>
    <property type="evidence" value="ECO:0007669"/>
    <property type="project" value="UniProtKB-KW"/>
</dbReference>
<dbReference type="GO" id="GO:0034220">
    <property type="term" value="P:monoatomic ion transmembrane transport"/>
    <property type="evidence" value="ECO:0007669"/>
    <property type="project" value="InterPro"/>
</dbReference>
<dbReference type="CDD" id="cd00342">
    <property type="entry name" value="gram_neg_porins"/>
    <property type="match status" value="1"/>
</dbReference>
<dbReference type="Gene3D" id="2.40.160.10">
    <property type="entry name" value="Porin"/>
    <property type="match status" value="1"/>
</dbReference>
<dbReference type="InterPro" id="IPR050298">
    <property type="entry name" value="Gram-neg_bact_OMP"/>
</dbReference>
<dbReference type="InterPro" id="IPR033900">
    <property type="entry name" value="Gram_neg_porin_domain"/>
</dbReference>
<dbReference type="InterPro" id="IPR023614">
    <property type="entry name" value="Porin_dom_sf"/>
</dbReference>
<dbReference type="InterPro" id="IPR001702">
    <property type="entry name" value="Porin_Gram-ve"/>
</dbReference>
<dbReference type="PANTHER" id="PTHR34501:SF9">
    <property type="entry name" value="MAJOR OUTER MEMBRANE PROTEIN P.IA"/>
    <property type="match status" value="1"/>
</dbReference>
<dbReference type="PANTHER" id="PTHR34501">
    <property type="entry name" value="PROTEIN YDDL-RELATED"/>
    <property type="match status" value="1"/>
</dbReference>
<dbReference type="Pfam" id="PF13609">
    <property type="entry name" value="Porin_4"/>
    <property type="match status" value="1"/>
</dbReference>
<dbReference type="PRINTS" id="PR00182">
    <property type="entry name" value="ECOLNEIPORIN"/>
</dbReference>
<dbReference type="SUPFAM" id="SSF56935">
    <property type="entry name" value="Porins"/>
    <property type="match status" value="1"/>
</dbReference>
<sequence length="366" mass="39571">MKKTLLATAIAGAMAASGAQAATVYNQDGTKLDIYGNVQIGFRNIEAENDNGNIETQNDVFDNGSTIGFAAEHVIYDGLTGYMKIEFDDFKADEMKTAGRDAGDTAYVGLKGNFGDVKLGSYDTLMDDWIQDPITNNEYFDVSDTSGSGSSVVAVGGEVETDQLTYVSPSFNGLELAIGTQYKGDMEEENVTSRGNASVFGGAKYTAGNFSVAATYDNLDNYEVTQTGVDNKQEFGDRYGVTGQYQWNSLRVALKYERFDSDLDNVDSVNFYGLGARYGYGYGDIYGAYQYVDVGGDTFGNVVDDATSGDSPSDTASDRGDDTYNEFIIGGTYNISDAMYTWVEAAFYDREDDEGDGVAAGVTYMF</sequence>
<comment type="subunit">
    <text evidence="1">Homotrimer.</text>
</comment>
<comment type="subcellular location">
    <subcellularLocation>
        <location evidence="2">Cell outer membrane</location>
        <topology evidence="1">Multi-pass membrane protein</topology>
    </subcellularLocation>
</comment>
<comment type="similarity">
    <text evidence="4">Belongs to the Gram-negative porin family.</text>
</comment>
<evidence type="ECO:0000250" key="1">
    <source>
        <dbReference type="UniProtKB" id="A9ZM27"/>
    </source>
</evidence>
<evidence type="ECO:0000269" key="2">
    <source>
    </source>
</evidence>
<evidence type="ECO:0000303" key="3">
    <source>
    </source>
</evidence>
<evidence type="ECO:0000305" key="4"/>
<evidence type="ECO:0000312" key="5">
    <source>
        <dbReference type="EMBL" id="CBV41588.1"/>
    </source>
</evidence>
<keyword id="KW-0998">Cell outer membrane</keyword>
<keyword id="KW-0903">Direct protein sequencing</keyword>
<keyword id="KW-0406">Ion transport</keyword>
<keyword id="KW-0472">Membrane</keyword>
<keyword id="KW-0626">Porin</keyword>
<keyword id="KW-0732">Signal</keyword>
<keyword id="KW-0812">Transmembrane</keyword>
<keyword id="KW-1134">Transmembrane beta strand</keyword>
<keyword id="KW-0813">Transport</keyword>
<accession>E1V825</accession>
<feature type="signal peptide" evidence="2">
    <location>
        <begin position="1"/>
        <end position="21"/>
    </location>
</feature>
<feature type="chain" id="PRO_0000431312" description="Major outer membrane protein">
    <location>
        <begin position="22"/>
        <end position="366"/>
    </location>
</feature>
<protein>
    <recommendedName>
        <fullName evidence="3">Major outer membrane protein</fullName>
    </recommendedName>
</protein>
<name>HOPP_HALED</name>